<proteinExistence type="inferred from homology"/>
<accession>Q9KI71</accession>
<keyword id="KW-0067">ATP-binding</keyword>
<keyword id="KW-0143">Chaperone</keyword>
<keyword id="KW-0963">Cytoplasm</keyword>
<keyword id="KW-0413">Isomerase</keyword>
<keyword id="KW-0547">Nucleotide-binding</keyword>
<protein>
    <recommendedName>
        <fullName evidence="1">Chaperonin GroEL</fullName>
        <ecNumber evidence="1">5.6.1.7</ecNumber>
    </recommendedName>
    <alternativeName>
        <fullName evidence="1">60 kDa chaperonin</fullName>
    </alternativeName>
    <alternativeName>
        <fullName evidence="1">Chaperonin-60</fullName>
        <shortName evidence="1">Cpn60</shortName>
    </alternativeName>
    <alternativeName>
        <fullName>Heat shock protein 60</fullName>
    </alternativeName>
</protein>
<name>CH60_PARDN</name>
<dbReference type="EC" id="5.6.1.7" evidence="1"/>
<dbReference type="EMBL" id="AF240565">
    <property type="protein sequence ID" value="AAF43450.2"/>
    <property type="molecule type" value="Genomic_DNA"/>
</dbReference>
<dbReference type="RefSeq" id="WP_006289831.1">
    <property type="nucleotide sequence ID" value="NZ_CALIQJ010000003.1"/>
</dbReference>
<dbReference type="SMR" id="Q9KI71"/>
<dbReference type="GO" id="GO:0005737">
    <property type="term" value="C:cytoplasm"/>
    <property type="evidence" value="ECO:0007669"/>
    <property type="project" value="UniProtKB-SubCell"/>
</dbReference>
<dbReference type="GO" id="GO:0005524">
    <property type="term" value="F:ATP binding"/>
    <property type="evidence" value="ECO:0007669"/>
    <property type="project" value="UniProtKB-UniRule"/>
</dbReference>
<dbReference type="GO" id="GO:0140662">
    <property type="term" value="F:ATP-dependent protein folding chaperone"/>
    <property type="evidence" value="ECO:0007669"/>
    <property type="project" value="InterPro"/>
</dbReference>
<dbReference type="GO" id="GO:0016853">
    <property type="term" value="F:isomerase activity"/>
    <property type="evidence" value="ECO:0007669"/>
    <property type="project" value="UniProtKB-KW"/>
</dbReference>
<dbReference type="GO" id="GO:0051082">
    <property type="term" value="F:unfolded protein binding"/>
    <property type="evidence" value="ECO:0007669"/>
    <property type="project" value="UniProtKB-UniRule"/>
</dbReference>
<dbReference type="GO" id="GO:0042026">
    <property type="term" value="P:protein refolding"/>
    <property type="evidence" value="ECO:0007669"/>
    <property type="project" value="UniProtKB-UniRule"/>
</dbReference>
<dbReference type="CDD" id="cd03344">
    <property type="entry name" value="GroEL"/>
    <property type="match status" value="1"/>
</dbReference>
<dbReference type="FunFam" id="3.50.7.10:FF:000001">
    <property type="entry name" value="60 kDa chaperonin"/>
    <property type="match status" value="1"/>
</dbReference>
<dbReference type="Gene3D" id="3.50.7.10">
    <property type="entry name" value="GroEL"/>
    <property type="match status" value="1"/>
</dbReference>
<dbReference type="Gene3D" id="1.10.560.10">
    <property type="entry name" value="GroEL-like equatorial domain"/>
    <property type="match status" value="1"/>
</dbReference>
<dbReference type="Gene3D" id="3.30.260.10">
    <property type="entry name" value="TCP-1-like chaperonin intermediate domain"/>
    <property type="match status" value="1"/>
</dbReference>
<dbReference type="HAMAP" id="MF_00600">
    <property type="entry name" value="CH60"/>
    <property type="match status" value="1"/>
</dbReference>
<dbReference type="InterPro" id="IPR018370">
    <property type="entry name" value="Chaperonin_Cpn60_CS"/>
</dbReference>
<dbReference type="InterPro" id="IPR001844">
    <property type="entry name" value="Cpn60/GroEL"/>
</dbReference>
<dbReference type="InterPro" id="IPR002423">
    <property type="entry name" value="Cpn60/GroEL/TCP-1"/>
</dbReference>
<dbReference type="InterPro" id="IPR027409">
    <property type="entry name" value="GroEL-like_apical_dom_sf"/>
</dbReference>
<dbReference type="InterPro" id="IPR027413">
    <property type="entry name" value="GROEL-like_equatorial_sf"/>
</dbReference>
<dbReference type="InterPro" id="IPR027410">
    <property type="entry name" value="TCP-1-like_intermed_sf"/>
</dbReference>
<dbReference type="NCBIfam" id="TIGR02348">
    <property type="entry name" value="GroEL"/>
    <property type="match status" value="1"/>
</dbReference>
<dbReference type="NCBIfam" id="NF000592">
    <property type="entry name" value="PRK00013.1"/>
    <property type="match status" value="1"/>
</dbReference>
<dbReference type="NCBIfam" id="NF009487">
    <property type="entry name" value="PRK12849.1"/>
    <property type="match status" value="1"/>
</dbReference>
<dbReference type="NCBIfam" id="NF009488">
    <property type="entry name" value="PRK12850.1"/>
    <property type="match status" value="1"/>
</dbReference>
<dbReference type="NCBIfam" id="NF009489">
    <property type="entry name" value="PRK12851.1"/>
    <property type="match status" value="1"/>
</dbReference>
<dbReference type="PANTHER" id="PTHR45633">
    <property type="entry name" value="60 KDA HEAT SHOCK PROTEIN, MITOCHONDRIAL"/>
    <property type="match status" value="1"/>
</dbReference>
<dbReference type="Pfam" id="PF00118">
    <property type="entry name" value="Cpn60_TCP1"/>
    <property type="match status" value="1"/>
</dbReference>
<dbReference type="PRINTS" id="PR00298">
    <property type="entry name" value="CHAPERONIN60"/>
</dbReference>
<dbReference type="SUPFAM" id="SSF52029">
    <property type="entry name" value="GroEL apical domain-like"/>
    <property type="match status" value="1"/>
</dbReference>
<dbReference type="SUPFAM" id="SSF48592">
    <property type="entry name" value="GroEL equatorial domain-like"/>
    <property type="match status" value="1"/>
</dbReference>
<dbReference type="SUPFAM" id="SSF54849">
    <property type="entry name" value="GroEL-intermediate domain like"/>
    <property type="match status" value="1"/>
</dbReference>
<dbReference type="PROSITE" id="PS00296">
    <property type="entry name" value="CHAPERONINS_CPN60"/>
    <property type="match status" value="1"/>
</dbReference>
<gene>
    <name evidence="1" type="primary">groEL</name>
    <name evidence="1" type="synonym">groL</name>
    <name type="synonym">hsp60</name>
</gene>
<evidence type="ECO:0000255" key="1">
    <source>
        <dbReference type="HAMAP-Rule" id="MF_00600"/>
    </source>
</evidence>
<sequence>MAKIIKYDEEARQGMLEGLDELANTVKVTLGPKGRNVVLDKSYGAPTITNDGVSIAKEIDLEDPYQRIGAELVKEVAKKTDDVAGDGTTTATVLAQALVHEGLKNVTSGSNPIALRRGIEKASQTIVKNLLENAKPVETKDQIAATATISAGDPEVGEKIAEALDKVGQDGVVTVEDNNKFGLDLDFTEGMRFDKGYISPYFVTNADDQTAVLEDPYILLTSGKVSSQQDIVHIADLVIKSGKPLLIVAEDVDGEALPTLVLNKIRGTFNTVAVKAPGFGDRRKAMLQDMAILTGAQVVSDELGLKLDSIDDTVLGHAAKVIVSKDETTIVSGAGSKEDIAARVAQIRSEIEASDSDYDREKLQERLAKLAGGVAVIKVGAATEVEAKERKHRIEDAVRNAKAAIEEGLLPGGGVALVQAAGEAEKSVKLDGDEATGADIVFRAIEAPLKQIAENAGLSGEVVIDKVRTLPAGSGLNAATGEYEDLMKAGVTDPVKVTRSALQNAASIAGLFLTTEAVVANKPEPPAPAAAQPDMGY</sequence>
<reference key="1">
    <citation type="submission" date="2000-06" db="EMBL/GenBank/DDBJ databases">
        <title>Phylogenetic relationship of Bifidobacterium.</title>
        <authorList>
            <person name="Jian W."/>
            <person name="Dong X."/>
        </authorList>
    </citation>
    <scope>NUCLEOTIDE SEQUENCE [GENOMIC DNA]</scope>
    <source>
        <strain>DSM 10105 / CCUG 36886 / JCM 12538 / KCTC 5846 / NCTC 12936</strain>
    </source>
</reference>
<comment type="function">
    <text evidence="1">Together with its co-chaperonin GroES, plays an essential role in assisting protein folding. The GroEL-GroES system forms a nano-cage that allows encapsulation of the non-native substrate proteins and provides a physical environment optimized to promote and accelerate protein folding.</text>
</comment>
<comment type="catalytic activity">
    <reaction evidence="1">
        <text>ATP + H2O + a folded polypeptide = ADP + phosphate + an unfolded polypeptide.</text>
        <dbReference type="EC" id="5.6.1.7"/>
    </reaction>
</comment>
<comment type="subunit">
    <text evidence="1">Forms a cylinder of 14 subunits composed of two heptameric rings stacked back-to-back. Interacts with the co-chaperonin GroES.</text>
</comment>
<comment type="subcellular location">
    <subcellularLocation>
        <location evidence="1">Cytoplasm</location>
    </subcellularLocation>
</comment>
<comment type="similarity">
    <text evidence="1">Belongs to the chaperonin (HSP60) family.</text>
</comment>
<feature type="chain" id="PRO_0000063470" description="Chaperonin GroEL">
    <location>
        <begin position="1"/>
        <end position="537"/>
    </location>
</feature>
<feature type="binding site" evidence="1">
    <location>
        <begin position="29"/>
        <end position="32"/>
    </location>
    <ligand>
        <name>ATP</name>
        <dbReference type="ChEBI" id="CHEBI:30616"/>
    </ligand>
</feature>
<feature type="binding site" evidence="1">
    <location>
        <begin position="86"/>
        <end position="90"/>
    </location>
    <ligand>
        <name>ATP</name>
        <dbReference type="ChEBI" id="CHEBI:30616"/>
    </ligand>
</feature>
<feature type="binding site" evidence="1">
    <location>
        <position position="413"/>
    </location>
    <ligand>
        <name>ATP</name>
        <dbReference type="ChEBI" id="CHEBI:30616"/>
    </ligand>
</feature>
<feature type="binding site" evidence="1">
    <location>
        <begin position="477"/>
        <end position="479"/>
    </location>
    <ligand>
        <name>ATP</name>
        <dbReference type="ChEBI" id="CHEBI:30616"/>
    </ligand>
</feature>
<feature type="binding site" evidence="1">
    <location>
        <position position="493"/>
    </location>
    <ligand>
        <name>ATP</name>
        <dbReference type="ChEBI" id="CHEBI:30616"/>
    </ligand>
</feature>
<organism>
    <name type="scientific">Parascardovia denticolens</name>
    <name type="common">Bifidobacterium denticolens</name>
    <dbReference type="NCBI Taxonomy" id="78258"/>
    <lineage>
        <taxon>Bacteria</taxon>
        <taxon>Bacillati</taxon>
        <taxon>Actinomycetota</taxon>
        <taxon>Actinomycetes</taxon>
        <taxon>Bifidobacteriales</taxon>
        <taxon>Bifidobacteriaceae</taxon>
        <taxon>Parascardovia</taxon>
    </lineage>
</organism>